<gene>
    <name evidence="1" type="primary">dnaA</name>
    <name type="ordered locus">SEN3655</name>
</gene>
<sequence length="466" mass="52628">MSLSLWQQCLARLQDELPATEFSMWIRPLQAELSDNTLALYAPNRFVLDWVRDKYLNNINGLLNTFCGADAPQLRFEVGTKPVTQTLKTPVHNVVAPTQTTTAQPQRVAPAARSGWDNVPAPAEPTYRSNVNVKHTFDNFVEGKSNQLARAAARQVADNPGGAYNPLFLYGGTGLGKTHLLHAVGNGIMARKPNAKVVYMHSERFVQDMVKALQNNAIEEFKRYYRSVDALLIDDIQFFANKERSQEEFFHTFNALLEGNQQIILTSDRYPKEINGVEDRLKSRFGWGLTVAIEPPELETRVAILMKKADENDIRLPGEVAFFIAKRLRSNVRELEGALNRVIANANFTGRAITIDFVREALRDLLALQEKLVTIDNIQKTVAEYYKIKIADLLSKRRSRSVARPRQMAMALAKELTNHSLPEIGDAFGGRDHTTVLHACRKIEQLREESHDIKEDFSNLIRTLSS</sequence>
<organism>
    <name type="scientific">Salmonella enteritidis PT4 (strain P125109)</name>
    <dbReference type="NCBI Taxonomy" id="550537"/>
    <lineage>
        <taxon>Bacteria</taxon>
        <taxon>Pseudomonadati</taxon>
        <taxon>Pseudomonadota</taxon>
        <taxon>Gammaproteobacteria</taxon>
        <taxon>Enterobacterales</taxon>
        <taxon>Enterobacteriaceae</taxon>
        <taxon>Salmonella</taxon>
    </lineage>
</organism>
<proteinExistence type="inferred from homology"/>
<name>DNAA_SALEP</name>
<keyword id="KW-0067">ATP-binding</keyword>
<keyword id="KW-0963">Cytoplasm</keyword>
<keyword id="KW-0235">DNA replication</keyword>
<keyword id="KW-0238">DNA-binding</keyword>
<keyword id="KW-0446">Lipid-binding</keyword>
<keyword id="KW-0547">Nucleotide-binding</keyword>
<reference key="1">
    <citation type="journal article" date="2008" name="Genome Res.">
        <title>Comparative genome analysis of Salmonella enteritidis PT4 and Salmonella gallinarum 287/91 provides insights into evolutionary and host adaptation pathways.</title>
        <authorList>
            <person name="Thomson N.R."/>
            <person name="Clayton D.J."/>
            <person name="Windhorst D."/>
            <person name="Vernikos G."/>
            <person name="Davidson S."/>
            <person name="Churcher C."/>
            <person name="Quail M.A."/>
            <person name="Stevens M."/>
            <person name="Jones M.A."/>
            <person name="Watson M."/>
            <person name="Barron A."/>
            <person name="Layton A."/>
            <person name="Pickard D."/>
            <person name="Kingsley R.A."/>
            <person name="Bignell A."/>
            <person name="Clark L."/>
            <person name="Harris B."/>
            <person name="Ormond D."/>
            <person name="Abdellah Z."/>
            <person name="Brooks K."/>
            <person name="Cherevach I."/>
            <person name="Chillingworth T."/>
            <person name="Woodward J."/>
            <person name="Norberczak H."/>
            <person name="Lord A."/>
            <person name="Arrowsmith C."/>
            <person name="Jagels K."/>
            <person name="Moule S."/>
            <person name="Mungall K."/>
            <person name="Saunders M."/>
            <person name="Whitehead S."/>
            <person name="Chabalgoity J.A."/>
            <person name="Maskell D."/>
            <person name="Humphreys T."/>
            <person name="Roberts M."/>
            <person name="Barrow P.A."/>
            <person name="Dougan G."/>
            <person name="Parkhill J."/>
        </authorList>
    </citation>
    <scope>NUCLEOTIDE SEQUENCE [LARGE SCALE GENOMIC DNA]</scope>
    <source>
        <strain>P125109</strain>
    </source>
</reference>
<protein>
    <recommendedName>
        <fullName evidence="1">Chromosomal replication initiator protein DnaA</fullName>
    </recommendedName>
</protein>
<evidence type="ECO:0000255" key="1">
    <source>
        <dbReference type="HAMAP-Rule" id="MF_00377"/>
    </source>
</evidence>
<accession>B5QUQ0</accession>
<dbReference type="EMBL" id="AM933172">
    <property type="protein sequence ID" value="CAR35231.1"/>
    <property type="molecule type" value="Genomic_DNA"/>
</dbReference>
<dbReference type="RefSeq" id="WP_000059095.1">
    <property type="nucleotide sequence ID" value="NC_011294.1"/>
</dbReference>
<dbReference type="SMR" id="B5QUQ0"/>
<dbReference type="KEGG" id="set:SEN3655"/>
<dbReference type="HOGENOM" id="CLU_026910_0_1_6"/>
<dbReference type="Proteomes" id="UP000000613">
    <property type="component" value="Chromosome"/>
</dbReference>
<dbReference type="GO" id="GO:0005737">
    <property type="term" value="C:cytoplasm"/>
    <property type="evidence" value="ECO:0007669"/>
    <property type="project" value="UniProtKB-SubCell"/>
</dbReference>
<dbReference type="GO" id="GO:0005886">
    <property type="term" value="C:plasma membrane"/>
    <property type="evidence" value="ECO:0007669"/>
    <property type="project" value="TreeGrafter"/>
</dbReference>
<dbReference type="GO" id="GO:0005524">
    <property type="term" value="F:ATP binding"/>
    <property type="evidence" value="ECO:0007669"/>
    <property type="project" value="UniProtKB-UniRule"/>
</dbReference>
<dbReference type="GO" id="GO:0016887">
    <property type="term" value="F:ATP hydrolysis activity"/>
    <property type="evidence" value="ECO:0007669"/>
    <property type="project" value="InterPro"/>
</dbReference>
<dbReference type="GO" id="GO:0003688">
    <property type="term" value="F:DNA replication origin binding"/>
    <property type="evidence" value="ECO:0007669"/>
    <property type="project" value="UniProtKB-UniRule"/>
</dbReference>
<dbReference type="GO" id="GO:0008289">
    <property type="term" value="F:lipid binding"/>
    <property type="evidence" value="ECO:0007669"/>
    <property type="project" value="UniProtKB-KW"/>
</dbReference>
<dbReference type="GO" id="GO:0006270">
    <property type="term" value="P:DNA replication initiation"/>
    <property type="evidence" value="ECO:0007669"/>
    <property type="project" value="UniProtKB-UniRule"/>
</dbReference>
<dbReference type="GO" id="GO:0006275">
    <property type="term" value="P:regulation of DNA replication"/>
    <property type="evidence" value="ECO:0007669"/>
    <property type="project" value="UniProtKB-UniRule"/>
</dbReference>
<dbReference type="CDD" id="cd00009">
    <property type="entry name" value="AAA"/>
    <property type="match status" value="1"/>
</dbReference>
<dbReference type="CDD" id="cd06571">
    <property type="entry name" value="Bac_DnaA_C"/>
    <property type="match status" value="1"/>
</dbReference>
<dbReference type="FunFam" id="1.10.1750.10:FF:000001">
    <property type="entry name" value="Chromosomal replication initiator protein DnaA"/>
    <property type="match status" value="1"/>
</dbReference>
<dbReference type="FunFam" id="1.10.8.60:FF:000003">
    <property type="entry name" value="Chromosomal replication initiator protein DnaA"/>
    <property type="match status" value="1"/>
</dbReference>
<dbReference type="FunFam" id="3.30.300.180:FF:000001">
    <property type="entry name" value="Chromosomal replication initiator protein DnaA"/>
    <property type="match status" value="1"/>
</dbReference>
<dbReference type="FunFam" id="3.40.50.300:FF:000103">
    <property type="entry name" value="Chromosomal replication initiator protein DnaA"/>
    <property type="match status" value="1"/>
</dbReference>
<dbReference type="Gene3D" id="1.10.1750.10">
    <property type="match status" value="1"/>
</dbReference>
<dbReference type="Gene3D" id="1.10.8.60">
    <property type="match status" value="1"/>
</dbReference>
<dbReference type="Gene3D" id="3.30.300.180">
    <property type="match status" value="1"/>
</dbReference>
<dbReference type="Gene3D" id="3.40.50.300">
    <property type="entry name" value="P-loop containing nucleotide triphosphate hydrolases"/>
    <property type="match status" value="1"/>
</dbReference>
<dbReference type="HAMAP" id="MF_00377">
    <property type="entry name" value="DnaA_bact"/>
    <property type="match status" value="1"/>
</dbReference>
<dbReference type="InterPro" id="IPR003593">
    <property type="entry name" value="AAA+_ATPase"/>
</dbReference>
<dbReference type="InterPro" id="IPR001957">
    <property type="entry name" value="Chromosome_initiator_DnaA"/>
</dbReference>
<dbReference type="InterPro" id="IPR020591">
    <property type="entry name" value="Chromosome_initiator_DnaA-like"/>
</dbReference>
<dbReference type="InterPro" id="IPR018312">
    <property type="entry name" value="Chromosome_initiator_DnaA_CS"/>
</dbReference>
<dbReference type="InterPro" id="IPR013159">
    <property type="entry name" value="DnaA_C"/>
</dbReference>
<dbReference type="InterPro" id="IPR013317">
    <property type="entry name" value="DnaA_dom"/>
</dbReference>
<dbReference type="InterPro" id="IPR024633">
    <property type="entry name" value="DnaA_N_dom"/>
</dbReference>
<dbReference type="InterPro" id="IPR038454">
    <property type="entry name" value="DnaA_N_sf"/>
</dbReference>
<dbReference type="InterPro" id="IPR027417">
    <property type="entry name" value="P-loop_NTPase"/>
</dbReference>
<dbReference type="InterPro" id="IPR010921">
    <property type="entry name" value="Trp_repressor/repl_initiator"/>
</dbReference>
<dbReference type="NCBIfam" id="TIGR00362">
    <property type="entry name" value="DnaA"/>
    <property type="match status" value="1"/>
</dbReference>
<dbReference type="PANTHER" id="PTHR30050">
    <property type="entry name" value="CHROMOSOMAL REPLICATION INITIATOR PROTEIN DNAA"/>
    <property type="match status" value="1"/>
</dbReference>
<dbReference type="PANTHER" id="PTHR30050:SF2">
    <property type="entry name" value="CHROMOSOMAL REPLICATION INITIATOR PROTEIN DNAA"/>
    <property type="match status" value="1"/>
</dbReference>
<dbReference type="Pfam" id="PF00308">
    <property type="entry name" value="Bac_DnaA"/>
    <property type="match status" value="1"/>
</dbReference>
<dbReference type="Pfam" id="PF08299">
    <property type="entry name" value="Bac_DnaA_C"/>
    <property type="match status" value="1"/>
</dbReference>
<dbReference type="Pfam" id="PF11638">
    <property type="entry name" value="DnaA_N"/>
    <property type="match status" value="1"/>
</dbReference>
<dbReference type="PRINTS" id="PR00051">
    <property type="entry name" value="DNAA"/>
</dbReference>
<dbReference type="SMART" id="SM00382">
    <property type="entry name" value="AAA"/>
    <property type="match status" value="1"/>
</dbReference>
<dbReference type="SMART" id="SM00760">
    <property type="entry name" value="Bac_DnaA_C"/>
    <property type="match status" value="1"/>
</dbReference>
<dbReference type="SUPFAM" id="SSF52540">
    <property type="entry name" value="P-loop containing nucleoside triphosphate hydrolases"/>
    <property type="match status" value="1"/>
</dbReference>
<dbReference type="SUPFAM" id="SSF48295">
    <property type="entry name" value="TrpR-like"/>
    <property type="match status" value="1"/>
</dbReference>
<dbReference type="PROSITE" id="PS01008">
    <property type="entry name" value="DNAA"/>
    <property type="match status" value="1"/>
</dbReference>
<feature type="chain" id="PRO_1000122010" description="Chromosomal replication initiator protein DnaA">
    <location>
        <begin position="1"/>
        <end position="466"/>
    </location>
</feature>
<feature type="region of interest" description="Domain I, interacts with DnaA modulators" evidence="1">
    <location>
        <begin position="1"/>
        <end position="86"/>
    </location>
</feature>
<feature type="region of interest" description="Domain II" evidence="1">
    <location>
        <begin position="86"/>
        <end position="129"/>
    </location>
</feature>
<feature type="region of interest" description="Domain III, AAA+ region" evidence="1">
    <location>
        <begin position="130"/>
        <end position="346"/>
    </location>
</feature>
<feature type="region of interest" description="Domain IV, binds dsDNA" evidence="1">
    <location>
        <begin position="347"/>
        <end position="466"/>
    </location>
</feature>
<feature type="binding site" evidence="1">
    <location>
        <position position="174"/>
    </location>
    <ligand>
        <name>ATP</name>
        <dbReference type="ChEBI" id="CHEBI:30616"/>
    </ligand>
</feature>
<feature type="binding site" evidence="1">
    <location>
        <position position="176"/>
    </location>
    <ligand>
        <name>ATP</name>
        <dbReference type="ChEBI" id="CHEBI:30616"/>
    </ligand>
</feature>
<feature type="binding site" evidence="1">
    <location>
        <position position="177"/>
    </location>
    <ligand>
        <name>ATP</name>
        <dbReference type="ChEBI" id="CHEBI:30616"/>
    </ligand>
</feature>
<feature type="binding site" evidence="1">
    <location>
        <position position="178"/>
    </location>
    <ligand>
        <name>ATP</name>
        <dbReference type="ChEBI" id="CHEBI:30616"/>
    </ligand>
</feature>
<comment type="function">
    <text evidence="1">Plays an essential role in the initiation and regulation of chromosomal replication. ATP-DnaA binds to the origin of replication (oriC) to initiate formation of the DNA replication initiation complex once per cell cycle. Binds the DnaA box (a 9 base pair repeat at the origin) and separates the double-stranded (ds)DNA. Forms a right-handed helical filament on oriC DNA; dsDNA binds to the exterior of the filament while single-stranded (ss)DNA is stabiized in the filament's interior. The ATP-DnaA-oriC complex binds and stabilizes one strand of the AT-rich DNA unwinding element (DUE), permitting loading of DNA polymerase. After initiation quickly degrades to an ADP-DnaA complex that is not apt for DNA replication. Binds acidic phospholipids.</text>
</comment>
<comment type="subunit">
    <text evidence="1">Oligomerizes as a right-handed, spiral filament on DNA at oriC.</text>
</comment>
<comment type="subcellular location">
    <subcellularLocation>
        <location evidence="1">Cytoplasm</location>
    </subcellularLocation>
</comment>
<comment type="domain">
    <text evidence="1">Domain I is involved in oligomerization and binding regulators, domain II is flexibile and of varying length in different bacteria, domain III forms the AAA+ region, while domain IV binds dsDNA.</text>
</comment>
<comment type="similarity">
    <text evidence="1">Belongs to the DnaA family.</text>
</comment>